<accession>Q52KE7</accession>
<accession>Q8BQ75</accession>
<accession>Q8R5H9</accession>
<accession>Q922K0</accession>
<accession>Q9CSZ3</accession>
<accession>Q9WV44</accession>
<protein>
    <recommendedName>
        <fullName>Cyclin-L1</fullName>
        <shortName>Cyclin-L</shortName>
    </recommendedName>
    <alternativeName>
        <fullName>Cyclin Ania-6a</fullName>
    </alternativeName>
</protein>
<dbReference type="EMBL" id="AF159159">
    <property type="protein sequence ID" value="AAD43568.1"/>
    <property type="status" value="ALT_FRAME"/>
    <property type="molecule type" value="mRNA"/>
</dbReference>
<dbReference type="EMBL" id="AF467251">
    <property type="protein sequence ID" value="AAL75565.1"/>
    <property type="molecule type" value="mRNA"/>
</dbReference>
<dbReference type="EMBL" id="AK051380">
    <property type="protein sequence ID" value="BAC34619.1"/>
    <property type="molecule type" value="mRNA"/>
</dbReference>
<dbReference type="EMBL" id="AK011629">
    <property type="protein sequence ID" value="BAB27744.3"/>
    <property type="molecule type" value="mRNA"/>
</dbReference>
<dbReference type="EMBL" id="BC094383">
    <property type="protein sequence ID" value="AAH94383.1"/>
    <property type="molecule type" value="mRNA"/>
</dbReference>
<dbReference type="CCDS" id="CCDS17390.1">
    <molecule id="Q52KE7-1"/>
</dbReference>
<dbReference type="RefSeq" id="NP_064321.2">
    <molecule id="Q52KE7-1"/>
    <property type="nucleotide sequence ID" value="NM_019937.4"/>
</dbReference>
<dbReference type="SMR" id="Q52KE7"/>
<dbReference type="BioGRID" id="208134">
    <property type="interactions" value="8"/>
</dbReference>
<dbReference type="ComplexPortal" id="CPX-351">
    <property type="entry name" value="Cyclin L1-CDK11B(p110) complex"/>
</dbReference>
<dbReference type="ComplexPortal" id="CPX-352">
    <property type="entry name" value="Cyclin L1-CDK11B(p58) complex"/>
</dbReference>
<dbReference type="FunCoup" id="Q52KE7">
    <property type="interactions" value="3675"/>
</dbReference>
<dbReference type="IntAct" id="Q52KE7">
    <property type="interactions" value="1"/>
</dbReference>
<dbReference type="MINT" id="Q52KE7"/>
<dbReference type="STRING" id="10090.ENSMUSP00000029416"/>
<dbReference type="GlyGen" id="Q52KE7">
    <property type="glycosylation" value="1 site"/>
</dbReference>
<dbReference type="iPTMnet" id="Q52KE7"/>
<dbReference type="PhosphoSitePlus" id="Q52KE7"/>
<dbReference type="jPOST" id="Q52KE7"/>
<dbReference type="PaxDb" id="10090-ENSMUSP00000029416"/>
<dbReference type="PeptideAtlas" id="Q52KE7"/>
<dbReference type="ProteomicsDB" id="281339">
    <molecule id="Q52KE7-1"/>
</dbReference>
<dbReference type="ProteomicsDB" id="281340">
    <molecule id="Q52KE7-2"/>
</dbReference>
<dbReference type="Pumba" id="Q52KE7"/>
<dbReference type="Antibodypedia" id="18411">
    <property type="antibodies" value="231 antibodies from 34 providers"/>
</dbReference>
<dbReference type="DNASU" id="56706"/>
<dbReference type="Ensembl" id="ENSMUST00000029416.14">
    <molecule id="Q52KE7-1"/>
    <property type="protein sequence ID" value="ENSMUSP00000029416.8"/>
    <property type="gene ID" value="ENSMUSG00000027829.16"/>
</dbReference>
<dbReference type="GeneID" id="56706"/>
<dbReference type="KEGG" id="mmu:56706"/>
<dbReference type="UCSC" id="uc008pku.1">
    <molecule id="Q52KE7-1"/>
    <property type="organism name" value="mouse"/>
</dbReference>
<dbReference type="UCSC" id="uc008pkx.1">
    <molecule id="Q52KE7-2"/>
    <property type="organism name" value="mouse"/>
</dbReference>
<dbReference type="AGR" id="MGI:1922664"/>
<dbReference type="CTD" id="57018"/>
<dbReference type="MGI" id="MGI:1922664">
    <property type="gene designation" value="Ccnl1"/>
</dbReference>
<dbReference type="VEuPathDB" id="HostDB:ENSMUSG00000027829"/>
<dbReference type="eggNOG" id="KOG0835">
    <property type="taxonomic scope" value="Eukaryota"/>
</dbReference>
<dbReference type="GeneTree" id="ENSGT00940000159135"/>
<dbReference type="HOGENOM" id="CLU_022000_6_1_1"/>
<dbReference type="InParanoid" id="Q52KE7"/>
<dbReference type="OMA" id="GHKHRDG"/>
<dbReference type="OrthoDB" id="10264655at2759"/>
<dbReference type="PhylomeDB" id="Q52KE7"/>
<dbReference type="TreeFam" id="TF101011"/>
<dbReference type="BioGRID-ORCS" id="56706">
    <property type="hits" value="8 hits in 75 CRISPR screens"/>
</dbReference>
<dbReference type="ChiTaRS" id="Ccnl1">
    <property type="organism name" value="mouse"/>
</dbReference>
<dbReference type="PRO" id="PR:Q52KE7"/>
<dbReference type="Proteomes" id="UP000000589">
    <property type="component" value="Chromosome 3"/>
</dbReference>
<dbReference type="RNAct" id="Q52KE7">
    <property type="molecule type" value="protein"/>
</dbReference>
<dbReference type="Bgee" id="ENSMUSG00000027829">
    <property type="expression patterns" value="Expressed in granulocyte and 259 other cell types or tissues"/>
</dbReference>
<dbReference type="ExpressionAtlas" id="Q52KE7">
    <property type="expression patterns" value="baseline and differential"/>
</dbReference>
<dbReference type="GO" id="GO:0000307">
    <property type="term" value="C:cyclin-dependent protein kinase holoenzyme complex"/>
    <property type="evidence" value="ECO:0000250"/>
    <property type="project" value="ComplexPortal"/>
</dbReference>
<dbReference type="GO" id="GO:0005737">
    <property type="term" value="C:cytoplasm"/>
    <property type="evidence" value="ECO:0007669"/>
    <property type="project" value="UniProtKB-SubCell"/>
</dbReference>
<dbReference type="GO" id="GO:0016607">
    <property type="term" value="C:nuclear speck"/>
    <property type="evidence" value="ECO:0007669"/>
    <property type="project" value="UniProtKB-SubCell"/>
</dbReference>
<dbReference type="GO" id="GO:0005634">
    <property type="term" value="C:nucleus"/>
    <property type="evidence" value="ECO:0000266"/>
    <property type="project" value="MGI"/>
</dbReference>
<dbReference type="GO" id="GO:0008023">
    <property type="term" value="C:transcription elongation factor complex"/>
    <property type="evidence" value="ECO:0000266"/>
    <property type="project" value="MGI"/>
</dbReference>
<dbReference type="GO" id="GO:0016538">
    <property type="term" value="F:cyclin-dependent protein serine/threonine kinase regulator activity"/>
    <property type="evidence" value="ECO:0007669"/>
    <property type="project" value="InterPro"/>
</dbReference>
<dbReference type="GO" id="GO:0042981">
    <property type="term" value="P:regulation of apoptotic process"/>
    <property type="evidence" value="ECO:0000303"/>
    <property type="project" value="ComplexPortal"/>
</dbReference>
<dbReference type="GO" id="GO:0051726">
    <property type="term" value="P:regulation of cell cycle"/>
    <property type="evidence" value="ECO:0000303"/>
    <property type="project" value="ComplexPortal"/>
</dbReference>
<dbReference type="GO" id="GO:0046605">
    <property type="term" value="P:regulation of centrosome cycle"/>
    <property type="evidence" value="ECO:0000303"/>
    <property type="project" value="ComplexPortal"/>
</dbReference>
<dbReference type="GO" id="GO:0043484">
    <property type="term" value="P:regulation of RNA splicing"/>
    <property type="evidence" value="ECO:0000250"/>
    <property type="project" value="ComplexPortal"/>
</dbReference>
<dbReference type="GO" id="GO:0006357">
    <property type="term" value="P:regulation of transcription by RNA polymerase II"/>
    <property type="evidence" value="ECO:0007669"/>
    <property type="project" value="InterPro"/>
</dbReference>
<dbReference type="CDD" id="cd20592">
    <property type="entry name" value="CYCLIN_CCNL1_rpt2"/>
    <property type="match status" value="1"/>
</dbReference>
<dbReference type="FunFam" id="1.10.472.10:FF:000014">
    <property type="entry name" value="cyclin-L1 isoform X1"/>
    <property type="match status" value="1"/>
</dbReference>
<dbReference type="FunFam" id="1.10.472.10:FF:000016">
    <property type="entry name" value="cyclin-L1 isoform X1"/>
    <property type="match status" value="1"/>
</dbReference>
<dbReference type="Gene3D" id="1.10.472.10">
    <property type="entry name" value="Cyclin-like"/>
    <property type="match status" value="2"/>
</dbReference>
<dbReference type="InterPro" id="IPR013763">
    <property type="entry name" value="Cyclin-like_dom"/>
</dbReference>
<dbReference type="InterPro" id="IPR036915">
    <property type="entry name" value="Cyclin-like_sf"/>
</dbReference>
<dbReference type="InterPro" id="IPR043198">
    <property type="entry name" value="Cyclin/Ssn8"/>
</dbReference>
<dbReference type="InterPro" id="IPR004367">
    <property type="entry name" value="Cyclin_C-dom"/>
</dbReference>
<dbReference type="InterPro" id="IPR006671">
    <property type="entry name" value="Cyclin_N"/>
</dbReference>
<dbReference type="PANTHER" id="PTHR10026">
    <property type="entry name" value="CYCLIN"/>
    <property type="match status" value="1"/>
</dbReference>
<dbReference type="Pfam" id="PF02984">
    <property type="entry name" value="Cyclin_C"/>
    <property type="match status" value="1"/>
</dbReference>
<dbReference type="Pfam" id="PF00134">
    <property type="entry name" value="Cyclin_N"/>
    <property type="match status" value="1"/>
</dbReference>
<dbReference type="PIRSF" id="PIRSF036580">
    <property type="entry name" value="Cyclin_L"/>
    <property type="match status" value="1"/>
</dbReference>
<dbReference type="SMART" id="SM00385">
    <property type="entry name" value="CYCLIN"/>
    <property type="match status" value="2"/>
</dbReference>
<dbReference type="SMART" id="SM01332">
    <property type="entry name" value="Cyclin_C"/>
    <property type="match status" value="1"/>
</dbReference>
<dbReference type="SUPFAM" id="SSF47954">
    <property type="entry name" value="Cyclin-like"/>
    <property type="match status" value="2"/>
</dbReference>
<proteinExistence type="evidence at protein level"/>
<comment type="function">
    <text evidence="3">Involved in pre-mRNA splicing. Functions in association with cyclin-dependent kinases (CDKs). May play a role in the regulation of RNA polymerase II (pol II). Inhibited by the CDK-specific inhibitor CDKN1A/p21.</text>
</comment>
<comment type="subunit">
    <text evidence="2 3 6">Interacts with POLR2A via its hyperphosphorylated C-terminal domain (CTD) (By similarity). Interacts with CDK11A, CDK11B, CDK12 and CDK13. May form a ternary complex with CDK11B and casein kinase II (CKII). Interacts with pre-mRNA-splicing factors, including at least SRSF1, SRSF2 and SRSF7/SLU7 (By similarity) (PubMed:17261272).</text>
</comment>
<comment type="subcellular location">
    <molecule>Isoform 1</molecule>
    <subcellularLocation>
        <location evidence="5">Nucleus speckle</location>
    </subcellularLocation>
    <subcellularLocation>
        <location evidence="3">Nucleus</location>
        <location evidence="3">Nucleoplasm</location>
    </subcellularLocation>
    <text>Found in nuclear intrachromatin granules clusters (IGC), also called nuclear speckles, which are storage compartments for nuclear proteins involved in mRNA processing.</text>
</comment>
<comment type="subcellular location">
    <molecule>Isoform 2</molecule>
    <subcellularLocation>
        <location evidence="5">Nucleus</location>
    </subcellularLocation>
    <subcellularLocation>
        <location evidence="5">Cytoplasm</location>
    </subcellularLocation>
</comment>
<comment type="alternative products">
    <event type="alternative splicing"/>
    <isoform>
        <id>Q52KE7-1</id>
        <name>1</name>
        <name>Cyclin L alpha</name>
        <sequence type="displayed"/>
    </isoform>
    <isoform>
        <id>Q52KE7-2</id>
        <name>2</name>
        <sequence type="described" ref="VSP_016126 VSP_016127"/>
    </isoform>
</comment>
<comment type="tissue specificity">
    <text evidence="7">Widely expressed (at protein level).</text>
</comment>
<comment type="domain">
    <text evidence="1">Contains a RS region (arginine-serine dipeptide repeat) within the C-terminal domain which is the hallmark of the SR family of splicing factors. This region probably plays a role in protein-protein interactions (By similarity).</text>
</comment>
<comment type="miscellaneous">
    <molecule>Isoform 1</molecule>
    <text>Found in the nucleus, with a speckled pattern of expression.</text>
</comment>
<comment type="miscellaneous">
    <molecule>Isoform 2</molecule>
    <text evidence="9">Found both in the nucleus and cytoplasm.</text>
</comment>
<comment type="similarity">
    <text evidence="9">Belongs to the cyclin family. Cyclin L subfamily.</text>
</comment>
<comment type="sequence caution" evidence="9">
    <conflict type="frameshift">
        <sequence resource="EMBL-CDS" id="AAD43568"/>
    </conflict>
</comment>
<reference key="1">
    <citation type="journal article" date="2001" name="Neuron">
        <title>Dopamine and glutamate induce distinct striatal splice forms of Ania-6, an RNA polymerase II-associated cyclin.</title>
        <authorList>
            <person name="Berke J.D."/>
            <person name="Sgambato V."/>
            <person name="Zhu P.-P."/>
            <person name="Lavoie B."/>
            <person name="Vincent M."/>
            <person name="Krause M."/>
            <person name="Hyman S.E."/>
        </authorList>
    </citation>
    <scope>NUCLEOTIDE SEQUENCE [MRNA] (ISOFORM 1)</scope>
    <scope>SUBCELLULAR LOCATION</scope>
    <source>
        <strain>BALB/cJ</strain>
        <strain>C57BL/6J</strain>
        <tissue>Testis</tissue>
    </source>
</reference>
<reference key="2">
    <citation type="journal article" date="2005" name="Science">
        <title>The transcriptional landscape of the mammalian genome.</title>
        <authorList>
            <person name="Carninci P."/>
            <person name="Kasukawa T."/>
            <person name="Katayama S."/>
            <person name="Gough J."/>
            <person name="Frith M.C."/>
            <person name="Maeda N."/>
            <person name="Oyama R."/>
            <person name="Ravasi T."/>
            <person name="Lenhard B."/>
            <person name="Wells C."/>
            <person name="Kodzius R."/>
            <person name="Shimokawa K."/>
            <person name="Bajic V.B."/>
            <person name="Brenner S.E."/>
            <person name="Batalov S."/>
            <person name="Forrest A.R."/>
            <person name="Zavolan M."/>
            <person name="Davis M.J."/>
            <person name="Wilming L.G."/>
            <person name="Aidinis V."/>
            <person name="Allen J.E."/>
            <person name="Ambesi-Impiombato A."/>
            <person name="Apweiler R."/>
            <person name="Aturaliya R.N."/>
            <person name="Bailey T.L."/>
            <person name="Bansal M."/>
            <person name="Baxter L."/>
            <person name="Beisel K.W."/>
            <person name="Bersano T."/>
            <person name="Bono H."/>
            <person name="Chalk A.M."/>
            <person name="Chiu K.P."/>
            <person name="Choudhary V."/>
            <person name="Christoffels A."/>
            <person name="Clutterbuck D.R."/>
            <person name="Crowe M.L."/>
            <person name="Dalla E."/>
            <person name="Dalrymple B.P."/>
            <person name="de Bono B."/>
            <person name="Della Gatta G."/>
            <person name="di Bernardo D."/>
            <person name="Down T."/>
            <person name="Engstrom P."/>
            <person name="Fagiolini M."/>
            <person name="Faulkner G."/>
            <person name="Fletcher C.F."/>
            <person name="Fukushima T."/>
            <person name="Furuno M."/>
            <person name="Futaki S."/>
            <person name="Gariboldi M."/>
            <person name="Georgii-Hemming P."/>
            <person name="Gingeras T.R."/>
            <person name="Gojobori T."/>
            <person name="Green R.E."/>
            <person name="Gustincich S."/>
            <person name="Harbers M."/>
            <person name="Hayashi Y."/>
            <person name="Hensch T.K."/>
            <person name="Hirokawa N."/>
            <person name="Hill D."/>
            <person name="Huminiecki L."/>
            <person name="Iacono M."/>
            <person name="Ikeo K."/>
            <person name="Iwama A."/>
            <person name="Ishikawa T."/>
            <person name="Jakt M."/>
            <person name="Kanapin A."/>
            <person name="Katoh M."/>
            <person name="Kawasawa Y."/>
            <person name="Kelso J."/>
            <person name="Kitamura H."/>
            <person name="Kitano H."/>
            <person name="Kollias G."/>
            <person name="Krishnan S.P."/>
            <person name="Kruger A."/>
            <person name="Kummerfeld S.K."/>
            <person name="Kurochkin I.V."/>
            <person name="Lareau L.F."/>
            <person name="Lazarevic D."/>
            <person name="Lipovich L."/>
            <person name="Liu J."/>
            <person name="Liuni S."/>
            <person name="McWilliam S."/>
            <person name="Madan Babu M."/>
            <person name="Madera M."/>
            <person name="Marchionni L."/>
            <person name="Matsuda H."/>
            <person name="Matsuzawa S."/>
            <person name="Miki H."/>
            <person name="Mignone F."/>
            <person name="Miyake S."/>
            <person name="Morris K."/>
            <person name="Mottagui-Tabar S."/>
            <person name="Mulder N."/>
            <person name="Nakano N."/>
            <person name="Nakauchi H."/>
            <person name="Ng P."/>
            <person name="Nilsson R."/>
            <person name="Nishiguchi S."/>
            <person name="Nishikawa S."/>
            <person name="Nori F."/>
            <person name="Ohara O."/>
            <person name="Okazaki Y."/>
            <person name="Orlando V."/>
            <person name="Pang K.C."/>
            <person name="Pavan W.J."/>
            <person name="Pavesi G."/>
            <person name="Pesole G."/>
            <person name="Petrovsky N."/>
            <person name="Piazza S."/>
            <person name="Reed J."/>
            <person name="Reid J.F."/>
            <person name="Ring B.Z."/>
            <person name="Ringwald M."/>
            <person name="Rost B."/>
            <person name="Ruan Y."/>
            <person name="Salzberg S.L."/>
            <person name="Sandelin A."/>
            <person name="Schneider C."/>
            <person name="Schoenbach C."/>
            <person name="Sekiguchi K."/>
            <person name="Semple C.A."/>
            <person name="Seno S."/>
            <person name="Sessa L."/>
            <person name="Sheng Y."/>
            <person name="Shibata Y."/>
            <person name="Shimada H."/>
            <person name="Shimada K."/>
            <person name="Silva D."/>
            <person name="Sinclair B."/>
            <person name="Sperling S."/>
            <person name="Stupka E."/>
            <person name="Sugiura K."/>
            <person name="Sultana R."/>
            <person name="Takenaka Y."/>
            <person name="Taki K."/>
            <person name="Tammoja K."/>
            <person name="Tan S.L."/>
            <person name="Tang S."/>
            <person name="Taylor M.S."/>
            <person name="Tegner J."/>
            <person name="Teichmann S.A."/>
            <person name="Ueda H.R."/>
            <person name="van Nimwegen E."/>
            <person name="Verardo R."/>
            <person name="Wei C.L."/>
            <person name="Yagi K."/>
            <person name="Yamanishi H."/>
            <person name="Zabarovsky E."/>
            <person name="Zhu S."/>
            <person name="Zimmer A."/>
            <person name="Hide W."/>
            <person name="Bult C."/>
            <person name="Grimmond S.M."/>
            <person name="Teasdale R.D."/>
            <person name="Liu E.T."/>
            <person name="Brusic V."/>
            <person name="Quackenbush J."/>
            <person name="Wahlestedt C."/>
            <person name="Mattick J.S."/>
            <person name="Hume D.A."/>
            <person name="Kai C."/>
            <person name="Sasaki D."/>
            <person name="Tomaru Y."/>
            <person name="Fukuda S."/>
            <person name="Kanamori-Katayama M."/>
            <person name="Suzuki M."/>
            <person name="Aoki J."/>
            <person name="Arakawa T."/>
            <person name="Iida J."/>
            <person name="Imamura K."/>
            <person name="Itoh M."/>
            <person name="Kato T."/>
            <person name="Kawaji H."/>
            <person name="Kawagashira N."/>
            <person name="Kawashima T."/>
            <person name="Kojima M."/>
            <person name="Kondo S."/>
            <person name="Konno H."/>
            <person name="Nakano K."/>
            <person name="Ninomiya N."/>
            <person name="Nishio T."/>
            <person name="Okada M."/>
            <person name="Plessy C."/>
            <person name="Shibata K."/>
            <person name="Shiraki T."/>
            <person name="Suzuki S."/>
            <person name="Tagami M."/>
            <person name="Waki K."/>
            <person name="Watahiki A."/>
            <person name="Okamura-Oho Y."/>
            <person name="Suzuki H."/>
            <person name="Kawai J."/>
            <person name="Hayashizaki Y."/>
        </authorList>
    </citation>
    <scope>NUCLEOTIDE SEQUENCE [LARGE SCALE MRNA] (ISOFORM 2)</scope>
    <scope>NUCLEOTIDE SEQUENCE [LARGE SCALE MRNA] OF 1-309 (ISOFORM 1)</scope>
    <source>
        <strain>C57BL/6J</strain>
        <tissue>Embryo</tissue>
        <tissue>Spinal ganglion</tissue>
    </source>
</reference>
<reference key="3">
    <citation type="journal article" date="2004" name="Genome Res.">
        <title>The status, quality, and expansion of the NIH full-length cDNA project: the Mammalian Gene Collection (MGC).</title>
        <authorList>
            <consortium name="The MGC Project Team"/>
        </authorList>
    </citation>
    <scope>NUCLEOTIDE SEQUENCE [LARGE SCALE MRNA] (ISOFORM 1)</scope>
    <source>
        <strain>C57BL/6J</strain>
        <tissue>Eye</tissue>
    </source>
</reference>
<reference key="4">
    <citation type="journal article" date="2007" name="Biochem. Biophys. Res. Commun.">
        <title>CDK13/CDC2L5 interacts with L-type cyclins and regulates alternative splicing.</title>
        <authorList>
            <person name="Chen H.H."/>
            <person name="Wong Y.H."/>
            <person name="Geneviere A.M."/>
            <person name="Fann M.J."/>
        </authorList>
    </citation>
    <scope>INTERACTION WITH CDK13</scope>
</reference>
<reference key="5">
    <citation type="journal article" date="2007" name="Proc. Natl. Acad. Sci. U.S.A.">
        <title>Large-scale phosphorylation analysis of mouse liver.</title>
        <authorList>
            <person name="Villen J."/>
            <person name="Beausoleil S.A."/>
            <person name="Gerber S.A."/>
            <person name="Gygi S.P."/>
        </authorList>
    </citation>
    <scope>PHOSPHORYLATION [LARGE SCALE ANALYSIS] AT SER-358</scope>
    <scope>IDENTIFICATION BY MASS SPECTROMETRY [LARGE SCALE ANALYSIS]</scope>
    <source>
        <tissue>Liver</tissue>
    </source>
</reference>
<reference key="6">
    <citation type="journal article" date="2008" name="J. Biol. Chem.">
        <title>Characterization of cyclin L1 and L2 interactions with CDK11 and splicing factors: influence of cyclin L isoforms on splice site selection.</title>
        <authorList>
            <person name="Loyer P."/>
            <person name="Trembley J.H."/>
            <person name="Grenet J.A."/>
            <person name="Busson A."/>
            <person name="Corlu A."/>
            <person name="Zhao W."/>
            <person name="Kocak M."/>
            <person name="Kidd V.J."/>
            <person name="Lahti J.M."/>
        </authorList>
    </citation>
    <scope>TISSUE SPECIFICITY</scope>
</reference>
<reference key="7">
    <citation type="journal article" date="2010" name="Cell">
        <title>A tissue-specific atlas of mouse protein phosphorylation and expression.</title>
        <authorList>
            <person name="Huttlin E.L."/>
            <person name="Jedrychowski M.P."/>
            <person name="Elias J.E."/>
            <person name="Goswami T."/>
            <person name="Rad R."/>
            <person name="Beausoleil S.A."/>
            <person name="Villen J."/>
            <person name="Haas W."/>
            <person name="Sowa M.E."/>
            <person name="Gygi S.P."/>
        </authorList>
    </citation>
    <scope>PHOSPHORYLATION [LARGE SCALE ANALYSIS] AT SER-341; SER-344 AND SER-358</scope>
    <scope>IDENTIFICATION BY MASS SPECTROMETRY [LARGE SCALE ANALYSIS]</scope>
    <source>
        <tissue>Brain</tissue>
        <tissue>Brown adipose tissue</tissue>
        <tissue>Heart</tissue>
        <tissue>Kidney</tissue>
        <tissue>Liver</tissue>
        <tissue>Lung</tissue>
        <tissue>Pancreas</tissue>
        <tissue>Spleen</tissue>
        <tissue>Testis</tissue>
    </source>
</reference>
<evidence type="ECO:0000250" key="1"/>
<evidence type="ECO:0000250" key="2">
    <source>
        <dbReference type="UniProtKB" id="Q9R1Q2"/>
    </source>
</evidence>
<evidence type="ECO:0000250" key="3">
    <source>
        <dbReference type="UniProtKB" id="Q9UK58"/>
    </source>
</evidence>
<evidence type="ECO:0000256" key="4">
    <source>
        <dbReference type="SAM" id="MobiDB-lite"/>
    </source>
</evidence>
<evidence type="ECO:0000269" key="5">
    <source>
    </source>
</evidence>
<evidence type="ECO:0000269" key="6">
    <source>
    </source>
</evidence>
<evidence type="ECO:0000269" key="7">
    <source>
    </source>
</evidence>
<evidence type="ECO:0000303" key="8">
    <source>
    </source>
</evidence>
<evidence type="ECO:0000305" key="9"/>
<evidence type="ECO:0007744" key="10">
    <source>
    </source>
</evidence>
<evidence type="ECO:0007744" key="11">
    <source>
    </source>
</evidence>
<feature type="chain" id="PRO_0000080481" description="Cyclin-L1">
    <location>
        <begin position="1"/>
        <end position="532"/>
    </location>
</feature>
<feature type="region of interest" description="Cyclin-like 1">
    <location>
        <begin position="94"/>
        <end position="196"/>
    </location>
</feature>
<feature type="region of interest" description="Cyclin-like 2">
    <location>
        <begin position="209"/>
        <end position="293"/>
    </location>
</feature>
<feature type="region of interest" description="Disordered" evidence="4">
    <location>
        <begin position="332"/>
        <end position="532"/>
    </location>
</feature>
<feature type="region of interest" description="RS">
    <location>
        <begin position="396"/>
        <end position="438"/>
    </location>
</feature>
<feature type="compositionally biased region" description="Basic and acidic residues" evidence="4">
    <location>
        <begin position="348"/>
        <end position="358"/>
    </location>
</feature>
<feature type="compositionally biased region" description="Basic and acidic residues" evidence="4">
    <location>
        <begin position="367"/>
        <end position="376"/>
    </location>
</feature>
<feature type="compositionally biased region" description="Basic residues" evidence="4">
    <location>
        <begin position="388"/>
        <end position="424"/>
    </location>
</feature>
<feature type="compositionally biased region" description="Basic residues" evidence="4">
    <location>
        <begin position="444"/>
        <end position="458"/>
    </location>
</feature>
<feature type="compositionally biased region" description="Basic residues" evidence="4">
    <location>
        <begin position="466"/>
        <end position="482"/>
    </location>
</feature>
<feature type="compositionally biased region" description="Basic residues" evidence="4">
    <location>
        <begin position="492"/>
        <end position="504"/>
    </location>
</feature>
<feature type="compositionally biased region" description="Basic and acidic residues" evidence="4">
    <location>
        <begin position="505"/>
        <end position="514"/>
    </location>
</feature>
<feature type="compositionally biased region" description="Basic residues" evidence="4">
    <location>
        <begin position="515"/>
        <end position="532"/>
    </location>
</feature>
<feature type="modified residue" description="Phosphothreonine" evidence="3">
    <location>
        <position position="331"/>
    </location>
</feature>
<feature type="modified residue" description="Phosphoserine" evidence="11">
    <location>
        <position position="341"/>
    </location>
</feature>
<feature type="modified residue" description="Phosphoserine" evidence="11">
    <location>
        <position position="344"/>
    </location>
</feature>
<feature type="modified residue" description="Phosphoserine" evidence="10 11">
    <location>
        <position position="358"/>
    </location>
</feature>
<feature type="modified residue" description="Phosphoserine" evidence="3">
    <location>
        <position position="361"/>
    </location>
</feature>
<feature type="modified residue" description="Phosphoserine" evidence="3">
    <location>
        <position position="380"/>
    </location>
</feature>
<feature type="modified residue" description="Phosphoserine" evidence="3">
    <location>
        <position position="451"/>
    </location>
</feature>
<feature type="cross-link" description="Glycyl lysine isopeptide (Lys-Gly) (interchain with G-Cter in SUMO2)" evidence="3">
    <location>
        <position position="345"/>
    </location>
</feature>
<feature type="cross-link" description="Glycyl lysine isopeptide (Lys-Gly) (interchain with G-Cter in SUMO2)" evidence="3">
    <location>
        <position position="353"/>
    </location>
</feature>
<feature type="cross-link" description="Glycyl lysine isopeptide (Lys-Gly) (interchain with G-Cter in SUMO2)" evidence="3">
    <location>
        <position position="368"/>
    </location>
</feature>
<feature type="splice variant" id="VSP_016126" description="In isoform 2." evidence="8">
    <original>IIVMYLQVLECERNQTLVQTAWNYMNDSLRTNVFVRFQPETIA</original>
    <variation>VSCKVQTLQFVSIRAFSEILNSVWRVKLTGVFKSFLLDVDICF</variation>
    <location>
        <begin position="210"/>
        <end position="252"/>
    </location>
</feature>
<feature type="splice variant" id="VSP_016127" description="In isoform 2." evidence="8">
    <location>
        <begin position="253"/>
        <end position="532"/>
    </location>
</feature>
<feature type="sequence conflict" description="In Ref. 1; AAL75565." evidence="9" ref="1">
    <original>CE</original>
    <variation>WQ</variation>
    <location>
        <begin position="93"/>
        <end position="94"/>
    </location>
</feature>
<feature type="sequence conflict" description="In Ref. 2; BAB27744." evidence="9" ref="2">
    <original>E</original>
    <variation>G</variation>
    <location>
        <position position="147"/>
    </location>
</feature>
<feature type="sequence conflict" description="In Ref. 2; BAB27744." evidence="9" ref="2">
    <original>E</original>
    <variation>G</variation>
    <location>
        <position position="283"/>
    </location>
</feature>
<keyword id="KW-0025">Alternative splicing</keyword>
<keyword id="KW-0195">Cyclin</keyword>
<keyword id="KW-0963">Cytoplasm</keyword>
<keyword id="KW-1017">Isopeptide bond</keyword>
<keyword id="KW-0539">Nucleus</keyword>
<keyword id="KW-0597">Phosphoprotein</keyword>
<keyword id="KW-1185">Reference proteome</keyword>
<keyword id="KW-0677">Repeat</keyword>
<keyword id="KW-0804">Transcription</keyword>
<keyword id="KW-0805">Transcription regulation</keyword>
<keyword id="KW-0832">Ubl conjugation</keyword>
<organism>
    <name type="scientific">Mus musculus</name>
    <name type="common">Mouse</name>
    <dbReference type="NCBI Taxonomy" id="10090"/>
    <lineage>
        <taxon>Eukaryota</taxon>
        <taxon>Metazoa</taxon>
        <taxon>Chordata</taxon>
        <taxon>Craniata</taxon>
        <taxon>Vertebrata</taxon>
        <taxon>Euteleostomi</taxon>
        <taxon>Mammalia</taxon>
        <taxon>Eutheria</taxon>
        <taxon>Euarchontoglires</taxon>
        <taxon>Glires</taxon>
        <taxon>Rodentia</taxon>
        <taxon>Myomorpha</taxon>
        <taxon>Muroidea</taxon>
        <taxon>Muridae</taxon>
        <taxon>Murinae</taxon>
        <taxon>Mus</taxon>
        <taxon>Mus</taxon>
    </lineage>
</organism>
<gene>
    <name type="primary">Ccnl1</name>
    <name type="synonym">Ania6a</name>
    <name type="synonym">Ccn1</name>
</gene>
<name>CCNL1_MOUSE</name>
<sequence length="532" mass="60133">MASGPHPTSTAAAAAAAAASASSAAPSAGGSSSGTTTTTTTTTGGILIGDRLYSEVSLTIDHSLIPEERLSPTPSMQDGLDLPSETDLRILGCELIQAAGILLRLPQVAMATGQVLFHRFFYSKSFVKHSFEIVAMACINLASKIEEAPRRIRDVINVFHHLRQLRGKRTPSPLILDQNYINTKNQVIKAERRVLKELGFCVHVKHPHKIIVMYLQVLECERNQTLVQTAWNYMNDSLRTNVFVRFQPETIACACIYLAARALQIPLPTRPHWFLLFGTTEEEIQEICIETLRLYTRKKPNYELLEKEVEKRKVALQEAKLKAKGLNLDGTPALSTLGGFSPASKPSSPREVKAEEKSPVSINVKTVKKEPEDRQQASKSPYNGVRKDSKRSRTSRSASRSRSRTRSRSRSHSPRRHYNNRRSRSGTYSSRSRSRSRSHSESPRRHHNHGSPHLKAKHTREDLKSSNRHGHKRKKSRSRSQSKTRDHSDVTKKHRHERGHHRDRRERSRSFERSHKGKHHGGSRSGHGRHRR</sequence>